<proteinExistence type="inferred from homology"/>
<gene>
    <name evidence="1" type="primary">rpoC</name>
    <name type="ordered locus">BDI_2263</name>
</gene>
<comment type="function">
    <text evidence="1">DNA-dependent RNA polymerase catalyzes the transcription of DNA into RNA using the four ribonucleoside triphosphates as substrates.</text>
</comment>
<comment type="catalytic activity">
    <reaction evidence="1">
        <text>RNA(n) + a ribonucleoside 5'-triphosphate = RNA(n+1) + diphosphate</text>
        <dbReference type="Rhea" id="RHEA:21248"/>
        <dbReference type="Rhea" id="RHEA-COMP:14527"/>
        <dbReference type="Rhea" id="RHEA-COMP:17342"/>
        <dbReference type="ChEBI" id="CHEBI:33019"/>
        <dbReference type="ChEBI" id="CHEBI:61557"/>
        <dbReference type="ChEBI" id="CHEBI:140395"/>
        <dbReference type="EC" id="2.7.7.6"/>
    </reaction>
</comment>
<comment type="cofactor">
    <cofactor evidence="1">
        <name>Mg(2+)</name>
        <dbReference type="ChEBI" id="CHEBI:18420"/>
    </cofactor>
    <text evidence="1">Binds 1 Mg(2+) ion per subunit.</text>
</comment>
<comment type="cofactor">
    <cofactor evidence="1">
        <name>Zn(2+)</name>
        <dbReference type="ChEBI" id="CHEBI:29105"/>
    </cofactor>
    <text evidence="1">Binds 2 Zn(2+) ions per subunit.</text>
</comment>
<comment type="subunit">
    <text evidence="1">The RNAP catalytic core consists of 2 alpha, 1 beta, 1 beta' and 1 omega subunit. When a sigma factor is associated with the core the holoenzyme is formed, which can initiate transcription.</text>
</comment>
<comment type="similarity">
    <text evidence="1">Belongs to the RNA polymerase beta' chain family.</text>
</comment>
<evidence type="ECO:0000255" key="1">
    <source>
        <dbReference type="HAMAP-Rule" id="MF_01322"/>
    </source>
</evidence>
<protein>
    <recommendedName>
        <fullName evidence="1">DNA-directed RNA polymerase subunit beta'</fullName>
        <shortName evidence="1">RNAP subunit beta'</shortName>
        <ecNumber evidence="1">2.7.7.6</ecNumber>
    </recommendedName>
    <alternativeName>
        <fullName evidence="1">RNA polymerase subunit beta'</fullName>
    </alternativeName>
    <alternativeName>
        <fullName evidence="1">Transcriptase subunit beta'</fullName>
    </alternativeName>
</protein>
<name>RPOC_PARD8</name>
<feature type="chain" id="PRO_0000308871" description="DNA-directed RNA polymerase subunit beta'">
    <location>
        <begin position="1"/>
        <end position="1431"/>
    </location>
</feature>
<feature type="binding site" evidence="1">
    <location>
        <position position="66"/>
    </location>
    <ligand>
        <name>Zn(2+)</name>
        <dbReference type="ChEBI" id="CHEBI:29105"/>
        <label>1</label>
    </ligand>
</feature>
<feature type="binding site" evidence="1">
    <location>
        <position position="68"/>
    </location>
    <ligand>
        <name>Zn(2+)</name>
        <dbReference type="ChEBI" id="CHEBI:29105"/>
        <label>1</label>
    </ligand>
</feature>
<feature type="binding site" evidence="1">
    <location>
        <position position="81"/>
    </location>
    <ligand>
        <name>Zn(2+)</name>
        <dbReference type="ChEBI" id="CHEBI:29105"/>
        <label>1</label>
    </ligand>
</feature>
<feature type="binding site" evidence="1">
    <location>
        <position position="84"/>
    </location>
    <ligand>
        <name>Zn(2+)</name>
        <dbReference type="ChEBI" id="CHEBI:29105"/>
        <label>1</label>
    </ligand>
</feature>
<feature type="binding site" evidence="1">
    <location>
        <position position="470"/>
    </location>
    <ligand>
        <name>Mg(2+)</name>
        <dbReference type="ChEBI" id="CHEBI:18420"/>
    </ligand>
</feature>
<feature type="binding site" evidence="1">
    <location>
        <position position="472"/>
    </location>
    <ligand>
        <name>Mg(2+)</name>
        <dbReference type="ChEBI" id="CHEBI:18420"/>
    </ligand>
</feature>
<feature type="binding site" evidence="1">
    <location>
        <position position="474"/>
    </location>
    <ligand>
        <name>Mg(2+)</name>
        <dbReference type="ChEBI" id="CHEBI:18420"/>
    </ligand>
</feature>
<feature type="binding site" evidence="1">
    <location>
        <position position="813"/>
    </location>
    <ligand>
        <name>Zn(2+)</name>
        <dbReference type="ChEBI" id="CHEBI:29105"/>
        <label>2</label>
    </ligand>
</feature>
<feature type="binding site" evidence="1">
    <location>
        <position position="887"/>
    </location>
    <ligand>
        <name>Zn(2+)</name>
        <dbReference type="ChEBI" id="CHEBI:29105"/>
        <label>2</label>
    </ligand>
</feature>
<feature type="binding site" evidence="1">
    <location>
        <position position="894"/>
    </location>
    <ligand>
        <name>Zn(2+)</name>
        <dbReference type="ChEBI" id="CHEBI:29105"/>
        <label>2</label>
    </ligand>
</feature>
<feature type="binding site" evidence="1">
    <location>
        <position position="897"/>
    </location>
    <ligand>
        <name>Zn(2+)</name>
        <dbReference type="ChEBI" id="CHEBI:29105"/>
        <label>2</label>
    </ligand>
</feature>
<sequence>MAFRKENKIKSNFSKITIGLASPEEILENSSGEVLKPETINYRTYKPERDGLFCERIFGPIKDYECHCGKYKRIRYKGIVCDRCGVEVTEKKVRRERMGHIHLVVPVAHIWYFRSLPNKIGYLLGLPTKKLDSIIYYERYVVIQPGCVDTVGELDLLSEEEYLDILDSLPRENQLLEDTDPNKFIAKIGAEAVYDLLARLDLDSLSYELRHRANTDTSQQRKNEALKRLQVVESFRASRGRNKPEWMIMKVIPVIPPELRPLVPLDGGRFATSDLNDLYRRVIIRNNRLKRLIDIKAPEVILRNEKRMLQEAVDSLFDNSRKSSAVKTDANRPLKSLSDSLKGKQGRFRQNLLGKRVDYSARSVIVVGPELKMHECGLPKNMAAELYKPFVIRKLIECGIVKTVKSAKKIVDRKEPVVWDILEYVMKGHPVLLNRAPTLHRLGIQAFQPKLIEGKAIQLHPLACTAFNADFDGDQMAVHLPLGNEAVLEAQMLMLASHNILNPANGAPITVPSQDMVLGLYYITKLRKGTQGEGLTFYGPEEATIAYNEKKLDIHAPIHVYVEDLDENGNLVKTMVETSVGRLMVNEFVPKEIGYVNEVLGKKSLRDIIGRVIKACGVARTAQFLDDIKNLGYYMAFKGGLSFNLADVLIPPEKDELVQKGYDEVEQIMANYNMGFITNNERYNQIIDTWTHVNSNLSNILIKQLTADNDGFNSIYMMMDSGARGSKEQIRQLSGMRGLMAKPQKSGAEGGQIIENPILSNFKEGLSVLEYFISTHGARKGLADTALKTADAGYLTRRLVDVSHDVIVNEEDCGTLRGLVCTELKNNEEVIASLYERILGRVSVHDVIHPITGEVIVRSGEEIREDAAKAIQDSPIESVEIRSVLTCESKKGVCAKCYGRNLATNRMVQKGEVVGVIAAQSIGEPGTQLTLRTFHVGGIASNIATENSITSKYDGILEIDELRAVEAVDEVSGKKHLVVVSRLAEMRIVDPNTKIVLLTHNIPYGSKLFFNNGDSIKKGDVIIEWDPFNAVIVSEVSGKIEFESLVENVTYKVESDETTGLKEKIIIESKDKTKAPAAHIVDENGNYLKNYSLPLGAHVVKDNGDVVKAGEVLVKIPRAVGKAGDITGGLPRVTELFEARNPSNPAVVSEIDGEVGFGKIKRGNREITVTSKLGEVKKYMVPLSKQLLVQENDYIRAGMPLSDGATTPSDILAIKGPTAVQEYIVNEVQDVYRLQGVKINDKHFEVIVRQMMRKVEVVDPGDTRFLEQQIVDKLEVMDENDRIWGKKVVTDPGDSQTLQAGQIVTARKLRDENSMLKRRDLKLVEVRDAIPATANQILQGITRAALQTNSFMSAASFQETTKVLNEAAINGKVDRLEGLKENVICGHLIPAGTGQREFDKLIVGAKDEFDRIFANRKNVVDFNAMDKDDEE</sequence>
<reference key="1">
    <citation type="journal article" date="2007" name="PLoS Biol.">
        <title>Evolution of symbiotic bacteria in the distal human intestine.</title>
        <authorList>
            <person name="Xu J."/>
            <person name="Mahowald M.A."/>
            <person name="Ley R.E."/>
            <person name="Lozupone C.A."/>
            <person name="Hamady M."/>
            <person name="Martens E.C."/>
            <person name="Henrissat B."/>
            <person name="Coutinho P.M."/>
            <person name="Minx P."/>
            <person name="Latreille P."/>
            <person name="Cordum H."/>
            <person name="Van Brunt A."/>
            <person name="Kim K."/>
            <person name="Fulton R.S."/>
            <person name="Fulton L.A."/>
            <person name="Clifton S.W."/>
            <person name="Wilson R.K."/>
            <person name="Knight R.D."/>
            <person name="Gordon J.I."/>
        </authorList>
    </citation>
    <scope>NUCLEOTIDE SEQUENCE [LARGE SCALE GENOMIC DNA]</scope>
    <source>
        <strain>ATCC 8503 / DSM 20701 / CIP 104284 / JCM 5825 / NCTC 11152</strain>
    </source>
</reference>
<dbReference type="EC" id="2.7.7.6" evidence="1"/>
<dbReference type="EMBL" id="CP000140">
    <property type="protein sequence ID" value="ABR43994.1"/>
    <property type="molecule type" value="Genomic_DNA"/>
</dbReference>
<dbReference type="RefSeq" id="WP_011966795.1">
    <property type="nucleotide sequence ID" value="NC_009615.1"/>
</dbReference>
<dbReference type="SMR" id="A6LE80"/>
<dbReference type="STRING" id="435591.BDI_2263"/>
<dbReference type="PaxDb" id="435591-BDI_2263"/>
<dbReference type="KEGG" id="pdi:BDI_2263"/>
<dbReference type="PATRIC" id="fig|435591.13.peg.2248"/>
<dbReference type="eggNOG" id="COG0086">
    <property type="taxonomic scope" value="Bacteria"/>
</dbReference>
<dbReference type="HOGENOM" id="CLU_000524_3_1_10"/>
<dbReference type="BioCyc" id="PDIS435591:G1G5A-2326-MONOMER"/>
<dbReference type="Proteomes" id="UP000000566">
    <property type="component" value="Chromosome"/>
</dbReference>
<dbReference type="GO" id="GO:0000428">
    <property type="term" value="C:DNA-directed RNA polymerase complex"/>
    <property type="evidence" value="ECO:0007669"/>
    <property type="project" value="UniProtKB-KW"/>
</dbReference>
<dbReference type="GO" id="GO:0003677">
    <property type="term" value="F:DNA binding"/>
    <property type="evidence" value="ECO:0007669"/>
    <property type="project" value="UniProtKB-UniRule"/>
</dbReference>
<dbReference type="GO" id="GO:0003899">
    <property type="term" value="F:DNA-directed RNA polymerase activity"/>
    <property type="evidence" value="ECO:0007669"/>
    <property type="project" value="UniProtKB-UniRule"/>
</dbReference>
<dbReference type="GO" id="GO:0000287">
    <property type="term" value="F:magnesium ion binding"/>
    <property type="evidence" value="ECO:0007669"/>
    <property type="project" value="UniProtKB-UniRule"/>
</dbReference>
<dbReference type="GO" id="GO:0008270">
    <property type="term" value="F:zinc ion binding"/>
    <property type="evidence" value="ECO:0007669"/>
    <property type="project" value="UniProtKB-UniRule"/>
</dbReference>
<dbReference type="GO" id="GO:0006351">
    <property type="term" value="P:DNA-templated transcription"/>
    <property type="evidence" value="ECO:0007669"/>
    <property type="project" value="UniProtKB-UniRule"/>
</dbReference>
<dbReference type="CDD" id="cd02655">
    <property type="entry name" value="RNAP_beta'_C"/>
    <property type="match status" value="1"/>
</dbReference>
<dbReference type="CDD" id="cd01609">
    <property type="entry name" value="RNAP_beta'_N"/>
    <property type="match status" value="1"/>
</dbReference>
<dbReference type="Gene3D" id="1.10.132.30">
    <property type="match status" value="1"/>
</dbReference>
<dbReference type="Gene3D" id="1.10.150.390">
    <property type="match status" value="1"/>
</dbReference>
<dbReference type="Gene3D" id="1.10.1790.20">
    <property type="match status" value="1"/>
</dbReference>
<dbReference type="Gene3D" id="1.10.40.90">
    <property type="match status" value="1"/>
</dbReference>
<dbReference type="Gene3D" id="2.40.40.20">
    <property type="match status" value="1"/>
</dbReference>
<dbReference type="Gene3D" id="2.40.50.100">
    <property type="match status" value="3"/>
</dbReference>
<dbReference type="Gene3D" id="4.10.860.120">
    <property type="entry name" value="RNA polymerase II, clamp domain"/>
    <property type="match status" value="1"/>
</dbReference>
<dbReference type="Gene3D" id="1.10.274.100">
    <property type="entry name" value="RNA polymerase Rpb1, domain 3"/>
    <property type="match status" value="2"/>
</dbReference>
<dbReference type="HAMAP" id="MF_01322">
    <property type="entry name" value="RNApol_bact_RpoC"/>
    <property type="match status" value="1"/>
</dbReference>
<dbReference type="InterPro" id="IPR045867">
    <property type="entry name" value="DNA-dir_RpoC_beta_prime"/>
</dbReference>
<dbReference type="InterPro" id="IPR012754">
    <property type="entry name" value="DNA-dir_RpoC_beta_prime_bact"/>
</dbReference>
<dbReference type="InterPro" id="IPR000722">
    <property type="entry name" value="RNA_pol_asu"/>
</dbReference>
<dbReference type="InterPro" id="IPR006592">
    <property type="entry name" value="RNA_pol_N"/>
</dbReference>
<dbReference type="InterPro" id="IPR007080">
    <property type="entry name" value="RNA_pol_Rpb1_1"/>
</dbReference>
<dbReference type="InterPro" id="IPR007066">
    <property type="entry name" value="RNA_pol_Rpb1_3"/>
</dbReference>
<dbReference type="InterPro" id="IPR042102">
    <property type="entry name" value="RNA_pol_Rpb1_3_sf"/>
</dbReference>
<dbReference type="InterPro" id="IPR007083">
    <property type="entry name" value="RNA_pol_Rpb1_4"/>
</dbReference>
<dbReference type="InterPro" id="IPR007081">
    <property type="entry name" value="RNA_pol_Rpb1_5"/>
</dbReference>
<dbReference type="InterPro" id="IPR044893">
    <property type="entry name" value="RNA_pol_Rpb1_clamp_domain"/>
</dbReference>
<dbReference type="InterPro" id="IPR038120">
    <property type="entry name" value="Rpb1_funnel_sf"/>
</dbReference>
<dbReference type="NCBIfam" id="TIGR02386">
    <property type="entry name" value="rpoC_TIGR"/>
    <property type="match status" value="1"/>
</dbReference>
<dbReference type="PANTHER" id="PTHR19376">
    <property type="entry name" value="DNA-DIRECTED RNA POLYMERASE"/>
    <property type="match status" value="1"/>
</dbReference>
<dbReference type="PANTHER" id="PTHR19376:SF54">
    <property type="entry name" value="DNA-DIRECTED RNA POLYMERASE SUBUNIT BETA"/>
    <property type="match status" value="1"/>
</dbReference>
<dbReference type="Pfam" id="PF04997">
    <property type="entry name" value="RNA_pol_Rpb1_1"/>
    <property type="match status" value="1"/>
</dbReference>
<dbReference type="Pfam" id="PF00623">
    <property type="entry name" value="RNA_pol_Rpb1_2"/>
    <property type="match status" value="2"/>
</dbReference>
<dbReference type="Pfam" id="PF04983">
    <property type="entry name" value="RNA_pol_Rpb1_3"/>
    <property type="match status" value="1"/>
</dbReference>
<dbReference type="Pfam" id="PF05000">
    <property type="entry name" value="RNA_pol_Rpb1_4"/>
    <property type="match status" value="1"/>
</dbReference>
<dbReference type="Pfam" id="PF04998">
    <property type="entry name" value="RNA_pol_Rpb1_5"/>
    <property type="match status" value="1"/>
</dbReference>
<dbReference type="SMART" id="SM00663">
    <property type="entry name" value="RPOLA_N"/>
    <property type="match status" value="1"/>
</dbReference>
<dbReference type="SUPFAM" id="SSF64484">
    <property type="entry name" value="beta and beta-prime subunits of DNA dependent RNA-polymerase"/>
    <property type="match status" value="1"/>
</dbReference>
<keyword id="KW-0240">DNA-directed RNA polymerase</keyword>
<keyword id="KW-0460">Magnesium</keyword>
<keyword id="KW-0479">Metal-binding</keyword>
<keyword id="KW-0548">Nucleotidyltransferase</keyword>
<keyword id="KW-1185">Reference proteome</keyword>
<keyword id="KW-0804">Transcription</keyword>
<keyword id="KW-0808">Transferase</keyword>
<keyword id="KW-0862">Zinc</keyword>
<accession>A6LE80</accession>
<organism>
    <name type="scientific">Parabacteroides distasonis (strain ATCC 8503 / DSM 20701 / CIP 104284 / JCM 5825 / NCTC 11152)</name>
    <dbReference type="NCBI Taxonomy" id="435591"/>
    <lineage>
        <taxon>Bacteria</taxon>
        <taxon>Pseudomonadati</taxon>
        <taxon>Bacteroidota</taxon>
        <taxon>Bacteroidia</taxon>
        <taxon>Bacteroidales</taxon>
        <taxon>Tannerellaceae</taxon>
        <taxon>Parabacteroides</taxon>
    </lineage>
</organism>